<protein>
    <recommendedName>
        <fullName evidence="1">8-amino-7-oxononanoate synthase</fullName>
        <shortName evidence="1">AONS</shortName>
        <ecNumber evidence="1">2.3.1.47</ecNumber>
    </recommendedName>
    <alternativeName>
        <fullName evidence="1">7-keto-8-amino-pelargonic acid synthase</fullName>
        <shortName evidence="1">7-KAP synthase</shortName>
        <shortName evidence="1">KAPA synthase</shortName>
    </alternativeName>
    <alternativeName>
        <fullName evidence="1">8-amino-7-ketopelargonate synthase</fullName>
    </alternativeName>
</protein>
<organism>
    <name type="scientific">Cupriavidus pinatubonensis (strain JMP 134 / LMG 1197)</name>
    <name type="common">Cupriavidus necator (strain JMP 134)</name>
    <dbReference type="NCBI Taxonomy" id="264198"/>
    <lineage>
        <taxon>Bacteria</taxon>
        <taxon>Pseudomonadati</taxon>
        <taxon>Pseudomonadota</taxon>
        <taxon>Betaproteobacteria</taxon>
        <taxon>Burkholderiales</taxon>
        <taxon>Burkholderiaceae</taxon>
        <taxon>Cupriavidus</taxon>
    </lineage>
</organism>
<feature type="chain" id="PRO_0000381087" description="8-amino-7-oxononanoate synthase">
    <location>
        <begin position="1"/>
        <end position="408"/>
    </location>
</feature>
<feature type="binding site" evidence="1">
    <location>
        <position position="20"/>
    </location>
    <ligand>
        <name>substrate</name>
    </ligand>
</feature>
<feature type="binding site" evidence="1">
    <location>
        <begin position="117"/>
        <end position="118"/>
    </location>
    <ligand>
        <name>pyridoxal 5'-phosphate</name>
        <dbReference type="ChEBI" id="CHEBI:597326"/>
    </ligand>
</feature>
<feature type="binding site" evidence="1">
    <location>
        <position position="142"/>
    </location>
    <ligand>
        <name>substrate</name>
    </ligand>
</feature>
<feature type="binding site" evidence="1">
    <location>
        <position position="188"/>
    </location>
    <ligand>
        <name>pyridoxal 5'-phosphate</name>
        <dbReference type="ChEBI" id="CHEBI:597326"/>
    </ligand>
</feature>
<feature type="binding site" evidence="1">
    <location>
        <position position="216"/>
    </location>
    <ligand>
        <name>pyridoxal 5'-phosphate</name>
        <dbReference type="ChEBI" id="CHEBI:597326"/>
    </ligand>
</feature>
<feature type="binding site" evidence="1">
    <location>
        <position position="244"/>
    </location>
    <ligand>
        <name>pyridoxal 5'-phosphate</name>
        <dbReference type="ChEBI" id="CHEBI:597326"/>
    </ligand>
</feature>
<feature type="binding site" evidence="1">
    <location>
        <position position="367"/>
    </location>
    <ligand>
        <name>substrate</name>
    </ligand>
</feature>
<feature type="modified residue" description="N6-(pyridoxal phosphate)lysine" evidence="1">
    <location>
        <position position="247"/>
    </location>
</feature>
<gene>
    <name evidence="1" type="primary">bioF</name>
    <name type="ordered locus">Reut_A0148</name>
</gene>
<keyword id="KW-0093">Biotin biosynthesis</keyword>
<keyword id="KW-0663">Pyridoxal phosphate</keyword>
<keyword id="KW-0808">Transferase</keyword>
<dbReference type="EC" id="2.3.1.47" evidence="1"/>
<dbReference type="EMBL" id="CP000090">
    <property type="protein sequence ID" value="AAZ59530.1"/>
    <property type="molecule type" value="Genomic_DNA"/>
</dbReference>
<dbReference type="SMR" id="Q477A3"/>
<dbReference type="STRING" id="264198.Reut_A0148"/>
<dbReference type="KEGG" id="reu:Reut_A0148"/>
<dbReference type="eggNOG" id="COG0156">
    <property type="taxonomic scope" value="Bacteria"/>
</dbReference>
<dbReference type="HOGENOM" id="CLU_015846_11_2_4"/>
<dbReference type="OrthoDB" id="9807157at2"/>
<dbReference type="UniPathway" id="UPA00078"/>
<dbReference type="GO" id="GO:0008710">
    <property type="term" value="F:8-amino-7-oxononanoate synthase activity"/>
    <property type="evidence" value="ECO:0007669"/>
    <property type="project" value="UniProtKB-UniRule"/>
</dbReference>
<dbReference type="GO" id="GO:0030170">
    <property type="term" value="F:pyridoxal phosphate binding"/>
    <property type="evidence" value="ECO:0007669"/>
    <property type="project" value="UniProtKB-UniRule"/>
</dbReference>
<dbReference type="GO" id="GO:0009102">
    <property type="term" value="P:biotin biosynthetic process"/>
    <property type="evidence" value="ECO:0007669"/>
    <property type="project" value="UniProtKB-UniRule"/>
</dbReference>
<dbReference type="Gene3D" id="3.90.1150.10">
    <property type="entry name" value="Aspartate Aminotransferase, domain 1"/>
    <property type="match status" value="1"/>
</dbReference>
<dbReference type="Gene3D" id="3.40.640.10">
    <property type="entry name" value="Type I PLP-dependent aspartate aminotransferase-like (Major domain)"/>
    <property type="match status" value="1"/>
</dbReference>
<dbReference type="HAMAP" id="MF_01693">
    <property type="entry name" value="BioF_aminotrans_2"/>
    <property type="match status" value="1"/>
</dbReference>
<dbReference type="InterPro" id="IPR004839">
    <property type="entry name" value="Aminotransferase_I/II_large"/>
</dbReference>
<dbReference type="InterPro" id="IPR050087">
    <property type="entry name" value="AON_synthase_class-II"/>
</dbReference>
<dbReference type="InterPro" id="IPR004723">
    <property type="entry name" value="AONS_Archaea/Proteobacteria"/>
</dbReference>
<dbReference type="InterPro" id="IPR022834">
    <property type="entry name" value="AONS_Proteobacteria"/>
</dbReference>
<dbReference type="InterPro" id="IPR015424">
    <property type="entry name" value="PyrdxlP-dep_Trfase"/>
</dbReference>
<dbReference type="InterPro" id="IPR015421">
    <property type="entry name" value="PyrdxlP-dep_Trfase_major"/>
</dbReference>
<dbReference type="InterPro" id="IPR015422">
    <property type="entry name" value="PyrdxlP-dep_Trfase_small"/>
</dbReference>
<dbReference type="NCBIfam" id="TIGR00858">
    <property type="entry name" value="bioF"/>
    <property type="match status" value="1"/>
</dbReference>
<dbReference type="PANTHER" id="PTHR13693:SF100">
    <property type="entry name" value="8-AMINO-7-OXONONANOATE SYNTHASE"/>
    <property type="match status" value="1"/>
</dbReference>
<dbReference type="PANTHER" id="PTHR13693">
    <property type="entry name" value="CLASS II AMINOTRANSFERASE/8-AMINO-7-OXONONANOATE SYNTHASE"/>
    <property type="match status" value="1"/>
</dbReference>
<dbReference type="Pfam" id="PF00155">
    <property type="entry name" value="Aminotran_1_2"/>
    <property type="match status" value="1"/>
</dbReference>
<dbReference type="SUPFAM" id="SSF53383">
    <property type="entry name" value="PLP-dependent transferases"/>
    <property type="match status" value="1"/>
</dbReference>
<sequence length="408" mass="42691">MLLEQLRRAADERQARALTRRRRIAHTACAPHQAVGPVDAPAPQPLLTFCSNDYMGLASHPDVVAALADGARLYGAGSGASHLVSGHSLAHARLEEELARWFAPHIPQARTLYFCTGYMANMAVLTALGTAGATLFCETLNHASLIDGARLARADVQRYPHCDAAALDALLAASTSPLKLIVTDSVFSMDGDVAPLAELLALAERHDAWIIVDDAHGFGVLGDDGHGVLQALGLNSERFIYIGTLGKAAGVAGAFVAAHETIIEHLVNTARPYIYTTAAPPAVAHALMASLAIIEGEEGRQRRANLNQLIADLRAGLAPLAAAAGWELGDSATAVQPLIVGDNAVSLALSARLEAEGIRVGAIRPPTVPEGTARLRITLSATHTAADVQRLVGVLADAVPPEAKREAA</sequence>
<evidence type="ECO:0000255" key="1">
    <source>
        <dbReference type="HAMAP-Rule" id="MF_01693"/>
    </source>
</evidence>
<reference key="1">
    <citation type="journal article" date="2010" name="PLoS ONE">
        <title>The complete multipartite genome sequence of Cupriavidus necator JMP134, a versatile pollutant degrader.</title>
        <authorList>
            <person name="Lykidis A."/>
            <person name="Perez-Pantoja D."/>
            <person name="Ledger T."/>
            <person name="Mavromatis K."/>
            <person name="Anderson I.J."/>
            <person name="Ivanova N.N."/>
            <person name="Hooper S.D."/>
            <person name="Lapidus A."/>
            <person name="Lucas S."/>
            <person name="Gonzalez B."/>
            <person name="Kyrpides N.C."/>
        </authorList>
    </citation>
    <scope>NUCLEOTIDE SEQUENCE [LARGE SCALE GENOMIC DNA]</scope>
    <source>
        <strain>JMP134 / LMG 1197</strain>
    </source>
</reference>
<comment type="function">
    <text evidence="1">Catalyzes the decarboxylative condensation of pimeloyl-[acyl-carrier protein] and L-alanine to produce 8-amino-7-oxononanoate (AON), [acyl-carrier protein], and carbon dioxide.</text>
</comment>
<comment type="catalytic activity">
    <reaction evidence="1">
        <text>6-carboxyhexanoyl-[ACP] + L-alanine + H(+) = (8S)-8-amino-7-oxononanoate + holo-[ACP] + CO2</text>
        <dbReference type="Rhea" id="RHEA:42288"/>
        <dbReference type="Rhea" id="RHEA-COMP:9685"/>
        <dbReference type="Rhea" id="RHEA-COMP:9955"/>
        <dbReference type="ChEBI" id="CHEBI:15378"/>
        <dbReference type="ChEBI" id="CHEBI:16526"/>
        <dbReference type="ChEBI" id="CHEBI:57972"/>
        <dbReference type="ChEBI" id="CHEBI:64479"/>
        <dbReference type="ChEBI" id="CHEBI:78846"/>
        <dbReference type="ChEBI" id="CHEBI:149468"/>
        <dbReference type="EC" id="2.3.1.47"/>
    </reaction>
</comment>
<comment type="cofactor">
    <cofactor evidence="1">
        <name>pyridoxal 5'-phosphate</name>
        <dbReference type="ChEBI" id="CHEBI:597326"/>
    </cofactor>
</comment>
<comment type="pathway">
    <text evidence="1">Cofactor biosynthesis; biotin biosynthesis.</text>
</comment>
<comment type="subunit">
    <text evidence="1">Homodimer.</text>
</comment>
<comment type="similarity">
    <text evidence="1">Belongs to the class-II pyridoxal-phosphate-dependent aminotransferase family. BioF subfamily.</text>
</comment>
<accession>Q477A3</accession>
<name>BIOF_CUPPJ</name>
<proteinExistence type="inferred from homology"/>